<organism>
    <name type="scientific">Xylella fastidiosa (strain Temecula1 / ATCC 700964)</name>
    <dbReference type="NCBI Taxonomy" id="183190"/>
    <lineage>
        <taxon>Bacteria</taxon>
        <taxon>Pseudomonadati</taxon>
        <taxon>Pseudomonadota</taxon>
        <taxon>Gammaproteobacteria</taxon>
        <taxon>Lysobacterales</taxon>
        <taxon>Lysobacteraceae</taxon>
        <taxon>Xylella</taxon>
    </lineage>
</organism>
<sequence>MGLIDFLRNKTKTAETAKNRLQIIIAQERTQRGGPDYLPLLQRELLEVIKKYVKIDADAVKVDLIKDGANDVLDISVALPDDSER</sequence>
<evidence type="ECO:0000250" key="1"/>
<evidence type="ECO:0000305" key="2"/>
<accession>P65366</accession>
<accession>Q9PDQ9</accession>
<name>MINE_XYLFT</name>
<gene>
    <name type="primary">minE</name>
    <name type="ordered locus">PD_0566</name>
</gene>
<feature type="chain" id="PRO_0000205896" description="Cell division topological specificity factor">
    <location>
        <begin position="1"/>
        <end position="85"/>
    </location>
</feature>
<reference key="1">
    <citation type="journal article" date="2003" name="J. Bacteriol.">
        <title>Comparative analyses of the complete genome sequences of Pierce's disease and citrus variegated chlorosis strains of Xylella fastidiosa.</title>
        <authorList>
            <person name="Van Sluys M.A."/>
            <person name="de Oliveira M.C."/>
            <person name="Monteiro-Vitorello C.B."/>
            <person name="Miyaki C.Y."/>
            <person name="Furlan L.R."/>
            <person name="Camargo L.E.A."/>
            <person name="da Silva A.C.R."/>
            <person name="Moon D.H."/>
            <person name="Takita M.A."/>
            <person name="Lemos E.G.M."/>
            <person name="Machado M.A."/>
            <person name="Ferro M.I.T."/>
            <person name="da Silva F.R."/>
            <person name="Goldman M.H.S."/>
            <person name="Goldman G.H."/>
            <person name="Lemos M.V.F."/>
            <person name="El-Dorry H."/>
            <person name="Tsai S.M."/>
            <person name="Carrer H."/>
            <person name="Carraro D.M."/>
            <person name="de Oliveira R.C."/>
            <person name="Nunes L.R."/>
            <person name="Siqueira W.J."/>
            <person name="Coutinho L.L."/>
            <person name="Kimura E.T."/>
            <person name="Ferro E.S."/>
            <person name="Harakava R."/>
            <person name="Kuramae E.E."/>
            <person name="Marino C.L."/>
            <person name="Giglioti E."/>
            <person name="Abreu I.L."/>
            <person name="Alves L.M.C."/>
            <person name="do Amaral A.M."/>
            <person name="Baia G.S."/>
            <person name="Blanco S.R."/>
            <person name="Brito M.S."/>
            <person name="Cannavan F.S."/>
            <person name="Celestino A.V."/>
            <person name="da Cunha A.F."/>
            <person name="Fenille R.C."/>
            <person name="Ferro J.A."/>
            <person name="Formighieri E.F."/>
            <person name="Kishi L.T."/>
            <person name="Leoni S.G."/>
            <person name="Oliveira A.R."/>
            <person name="Rosa V.E. Jr."/>
            <person name="Sassaki F.T."/>
            <person name="Sena J.A.D."/>
            <person name="de Souza A.A."/>
            <person name="Truffi D."/>
            <person name="Tsukumo F."/>
            <person name="Yanai G.M."/>
            <person name="Zaros L.G."/>
            <person name="Civerolo E.L."/>
            <person name="Simpson A.J.G."/>
            <person name="Almeida N.F. Jr."/>
            <person name="Setubal J.C."/>
            <person name="Kitajima J.P."/>
        </authorList>
    </citation>
    <scope>NUCLEOTIDE SEQUENCE [LARGE SCALE GENOMIC DNA]</scope>
    <source>
        <strain>Temecula1 / ATCC 700964</strain>
    </source>
</reference>
<comment type="function">
    <text evidence="1">Prevents the cell division inhibition by proteins MinC and MinD at internal division sites while permitting inhibition at polar sites. This ensures cell division at the proper site by restricting the formation of a division septum at the midpoint of the long axis of the cell (By similarity).</text>
</comment>
<comment type="similarity">
    <text evidence="2">Belongs to the MinE family.</text>
</comment>
<proteinExistence type="inferred from homology"/>
<dbReference type="EMBL" id="AE009442">
    <property type="protein sequence ID" value="AAO28439.1"/>
    <property type="molecule type" value="Genomic_DNA"/>
</dbReference>
<dbReference type="RefSeq" id="WP_004090594.1">
    <property type="nucleotide sequence ID" value="NC_004556.1"/>
</dbReference>
<dbReference type="SMR" id="P65366"/>
<dbReference type="GeneID" id="93904281"/>
<dbReference type="KEGG" id="xft:PD_0566"/>
<dbReference type="HOGENOM" id="CLU_137929_2_1_6"/>
<dbReference type="Proteomes" id="UP000002516">
    <property type="component" value="Chromosome"/>
</dbReference>
<dbReference type="GO" id="GO:0051301">
    <property type="term" value="P:cell division"/>
    <property type="evidence" value="ECO:0007669"/>
    <property type="project" value="UniProtKB-KW"/>
</dbReference>
<dbReference type="GO" id="GO:0032955">
    <property type="term" value="P:regulation of division septum assembly"/>
    <property type="evidence" value="ECO:0007669"/>
    <property type="project" value="InterPro"/>
</dbReference>
<dbReference type="FunFam" id="3.30.1070.10:FF:000001">
    <property type="entry name" value="Cell division topological specificity factor"/>
    <property type="match status" value="1"/>
</dbReference>
<dbReference type="Gene3D" id="3.30.1070.10">
    <property type="entry name" value="Cell division topological specificity factor MinE"/>
    <property type="match status" value="1"/>
</dbReference>
<dbReference type="HAMAP" id="MF_00262">
    <property type="entry name" value="MinE"/>
    <property type="match status" value="1"/>
</dbReference>
<dbReference type="InterPro" id="IPR005527">
    <property type="entry name" value="MinE"/>
</dbReference>
<dbReference type="InterPro" id="IPR036707">
    <property type="entry name" value="MinE_sf"/>
</dbReference>
<dbReference type="NCBIfam" id="TIGR01215">
    <property type="entry name" value="minE"/>
    <property type="match status" value="1"/>
</dbReference>
<dbReference type="NCBIfam" id="NF001422">
    <property type="entry name" value="PRK00296.1"/>
    <property type="match status" value="1"/>
</dbReference>
<dbReference type="Pfam" id="PF03776">
    <property type="entry name" value="MinE"/>
    <property type="match status" value="1"/>
</dbReference>
<dbReference type="SUPFAM" id="SSF55229">
    <property type="entry name" value="Cell division protein MinE topological specificity domain"/>
    <property type="match status" value="1"/>
</dbReference>
<protein>
    <recommendedName>
        <fullName>Cell division topological specificity factor</fullName>
    </recommendedName>
</protein>
<keyword id="KW-0131">Cell cycle</keyword>
<keyword id="KW-0132">Cell division</keyword>
<keyword id="KW-1185">Reference proteome</keyword>